<evidence type="ECO:0000255" key="1">
    <source>
        <dbReference type="HAMAP-Rule" id="MF_01384"/>
    </source>
</evidence>
<evidence type="ECO:0000256" key="2">
    <source>
        <dbReference type="SAM" id="MobiDB-lite"/>
    </source>
</evidence>
<feature type="chain" id="PRO_0000340517" description="Urease accessory protein UreD">
    <location>
        <begin position="1"/>
        <end position="297"/>
    </location>
</feature>
<feature type="region of interest" description="Disordered" evidence="2">
    <location>
        <begin position="1"/>
        <end position="41"/>
    </location>
</feature>
<accession>Q1GJP5</accession>
<protein>
    <recommendedName>
        <fullName evidence="1">Urease accessory protein UreD</fullName>
    </recommendedName>
</protein>
<reference key="1">
    <citation type="submission" date="2006-05" db="EMBL/GenBank/DDBJ databases">
        <title>Complete sequence of chromosome of Silicibacter sp. TM1040.</title>
        <authorList>
            <consortium name="US DOE Joint Genome Institute"/>
            <person name="Copeland A."/>
            <person name="Lucas S."/>
            <person name="Lapidus A."/>
            <person name="Barry K."/>
            <person name="Detter J.C."/>
            <person name="Glavina del Rio T."/>
            <person name="Hammon N."/>
            <person name="Israni S."/>
            <person name="Dalin E."/>
            <person name="Tice H."/>
            <person name="Pitluck S."/>
            <person name="Brettin T."/>
            <person name="Bruce D."/>
            <person name="Han C."/>
            <person name="Tapia R."/>
            <person name="Goodwin L."/>
            <person name="Thompson L.S."/>
            <person name="Gilna P."/>
            <person name="Schmutz J."/>
            <person name="Larimer F."/>
            <person name="Land M."/>
            <person name="Hauser L."/>
            <person name="Kyrpides N."/>
            <person name="Kim E."/>
            <person name="Belas R."/>
            <person name="Moran M.A."/>
            <person name="Buchan A."/>
            <person name="Gonzalez J.M."/>
            <person name="Schell M.A."/>
            <person name="Sun F."/>
            <person name="Richardson P."/>
        </authorList>
    </citation>
    <scope>NUCLEOTIDE SEQUENCE [LARGE SCALE GENOMIC DNA]</scope>
    <source>
        <strain>TM1040</strain>
    </source>
</reference>
<organism>
    <name type="scientific">Ruegeria sp. (strain TM1040)</name>
    <name type="common">Silicibacter sp.</name>
    <dbReference type="NCBI Taxonomy" id="292414"/>
    <lineage>
        <taxon>Bacteria</taxon>
        <taxon>Pseudomonadati</taxon>
        <taxon>Pseudomonadota</taxon>
        <taxon>Alphaproteobacteria</taxon>
        <taxon>Rhodobacterales</taxon>
        <taxon>Roseobacteraceae</taxon>
        <taxon>Ruegeria</taxon>
    </lineage>
</organism>
<comment type="function">
    <text evidence="1">Required for maturation of urease via the functional incorporation of the urease nickel metallocenter.</text>
</comment>
<comment type="subunit">
    <text evidence="1">UreD, UreF and UreG form a complex that acts as a GTP-hydrolysis-dependent molecular chaperone, activating the urease apoprotein by helping to assemble the nickel containing metallocenter of UreC. The UreE protein probably delivers the nickel.</text>
</comment>
<comment type="subcellular location">
    <subcellularLocation>
        <location evidence="1">Cytoplasm</location>
    </subcellularLocation>
</comment>
<comment type="similarity">
    <text evidence="1">Belongs to the UreD family.</text>
</comment>
<sequence length="297" mass="31963">MPQAADIATAPQRPSAPGDVVAAGQPPRARGRAHVSSKRRDDGAVALDTLHQSGALKLLFPTGRPDLEAVTVNTAGGITGGDDFALTAKAGAQSQLTLTTQAAERVYRAQPHQTGQMTTRLSVEPQARLRWVPQETILFQHSAFRRSLHVELADDAELLLVEPLVFGRVAMGEHLSALRFHDQIQIRRAGRILFRDAIRLDGDAMAQLKRPGIAGVLSGPCTAMVTLVLASPGAEAALAWLRTQLPAGKEAYGGASLLAPNLLHMRLLARDSFVLRQSLLPILDKLTEGSLPRCWRL</sequence>
<keyword id="KW-0143">Chaperone</keyword>
<keyword id="KW-0963">Cytoplasm</keyword>
<keyword id="KW-0996">Nickel insertion</keyword>
<keyword id="KW-1185">Reference proteome</keyword>
<gene>
    <name evidence="1" type="primary">ureD</name>
    <name type="ordered locus">TM1040_0388</name>
</gene>
<name>URED_RUEST</name>
<dbReference type="EMBL" id="CP000377">
    <property type="protein sequence ID" value="ABF63121.1"/>
    <property type="molecule type" value="Genomic_DNA"/>
</dbReference>
<dbReference type="RefSeq" id="WP_011537736.1">
    <property type="nucleotide sequence ID" value="NC_008044.1"/>
</dbReference>
<dbReference type="SMR" id="Q1GJP5"/>
<dbReference type="STRING" id="292414.TM1040_0388"/>
<dbReference type="KEGG" id="sit:TM1040_0388"/>
<dbReference type="eggNOG" id="COG0829">
    <property type="taxonomic scope" value="Bacteria"/>
</dbReference>
<dbReference type="HOGENOM" id="CLU_056339_2_0_5"/>
<dbReference type="OrthoDB" id="9798842at2"/>
<dbReference type="Proteomes" id="UP000000636">
    <property type="component" value="Chromosome"/>
</dbReference>
<dbReference type="GO" id="GO:0005737">
    <property type="term" value="C:cytoplasm"/>
    <property type="evidence" value="ECO:0007669"/>
    <property type="project" value="UniProtKB-SubCell"/>
</dbReference>
<dbReference type="GO" id="GO:0016151">
    <property type="term" value="F:nickel cation binding"/>
    <property type="evidence" value="ECO:0007669"/>
    <property type="project" value="UniProtKB-UniRule"/>
</dbReference>
<dbReference type="HAMAP" id="MF_01384">
    <property type="entry name" value="UreD"/>
    <property type="match status" value="1"/>
</dbReference>
<dbReference type="InterPro" id="IPR002669">
    <property type="entry name" value="UreD"/>
</dbReference>
<dbReference type="PANTHER" id="PTHR33643">
    <property type="entry name" value="UREASE ACCESSORY PROTEIN D"/>
    <property type="match status" value="1"/>
</dbReference>
<dbReference type="PANTHER" id="PTHR33643:SF1">
    <property type="entry name" value="UREASE ACCESSORY PROTEIN D"/>
    <property type="match status" value="1"/>
</dbReference>
<dbReference type="Pfam" id="PF01774">
    <property type="entry name" value="UreD"/>
    <property type="match status" value="1"/>
</dbReference>
<proteinExistence type="inferred from homology"/>